<keyword id="KW-0028">Amino-acid biosynthesis</keyword>
<keyword id="KW-0055">Arginine biosynthesis</keyword>
<keyword id="KW-0067">ATP-binding</keyword>
<keyword id="KW-0315">Glutamine amidotransferase</keyword>
<keyword id="KW-0436">Ligase</keyword>
<keyword id="KW-0547">Nucleotide-binding</keyword>
<keyword id="KW-0665">Pyrimidine biosynthesis</keyword>
<feature type="chain" id="PRO_0000112346" description="Carbamoyl phosphate synthase small chain">
    <location>
        <begin position="1"/>
        <end position="379"/>
    </location>
</feature>
<feature type="domain" description="Glutamine amidotransferase type-1" evidence="1">
    <location>
        <begin position="193"/>
        <end position="379"/>
    </location>
</feature>
<feature type="region of interest" description="CPSase" evidence="1">
    <location>
        <begin position="1"/>
        <end position="189"/>
    </location>
</feature>
<feature type="active site" description="Nucleophile" evidence="1">
    <location>
        <position position="269"/>
    </location>
</feature>
<feature type="active site" evidence="1">
    <location>
        <position position="353"/>
    </location>
</feature>
<feature type="active site" evidence="1">
    <location>
        <position position="355"/>
    </location>
</feature>
<feature type="binding site" evidence="1">
    <location>
        <position position="47"/>
    </location>
    <ligand>
        <name>L-glutamine</name>
        <dbReference type="ChEBI" id="CHEBI:58359"/>
    </ligand>
</feature>
<feature type="binding site" evidence="1">
    <location>
        <position position="241"/>
    </location>
    <ligand>
        <name>L-glutamine</name>
        <dbReference type="ChEBI" id="CHEBI:58359"/>
    </ligand>
</feature>
<feature type="binding site" evidence="1">
    <location>
        <position position="243"/>
    </location>
    <ligand>
        <name>L-glutamine</name>
        <dbReference type="ChEBI" id="CHEBI:58359"/>
    </ligand>
</feature>
<feature type="binding site" evidence="1">
    <location>
        <position position="270"/>
    </location>
    <ligand>
        <name>L-glutamine</name>
        <dbReference type="ChEBI" id="CHEBI:58359"/>
    </ligand>
</feature>
<feature type="binding site" evidence="1">
    <location>
        <position position="273"/>
    </location>
    <ligand>
        <name>L-glutamine</name>
        <dbReference type="ChEBI" id="CHEBI:58359"/>
    </ligand>
</feature>
<feature type="binding site" evidence="1">
    <location>
        <position position="311"/>
    </location>
    <ligand>
        <name>L-glutamine</name>
        <dbReference type="ChEBI" id="CHEBI:58359"/>
    </ligand>
</feature>
<feature type="binding site" evidence="1">
    <location>
        <position position="313"/>
    </location>
    <ligand>
        <name>L-glutamine</name>
        <dbReference type="ChEBI" id="CHEBI:58359"/>
    </ligand>
</feature>
<feature type="binding site" evidence="1">
    <location>
        <position position="314"/>
    </location>
    <ligand>
        <name>L-glutamine</name>
        <dbReference type="ChEBI" id="CHEBI:58359"/>
    </ligand>
</feature>
<name>CARA_VIBVY</name>
<sequence>MSKSALLVLEDGTVFRGVSIGADGISVGEVVFNTSMTGYQEILTDPSYSQQIVTLTYPHIGNTGTTSEDEESSSIHAQGLVIRDLPLIASNFRSEQSLSDYLKSQNIVGIADIDTRKLTRILREKGAQNGCIVAGNNLDEALALAKAKEFPGLKGMDLAKEVTTKEAYQWKQGSWTLEGGLPEAKDDSELPYHVVAYDFGAKRNILRMLVDRGCRLTVVPAETSAEDVLALNPDGVFLSNGPGDPAPCTYAIEATKVFLEKGLPVFGICLGHQILALASGAKTVKMKFGHHGANHPVKDLDRNVVMITSQNHGFAADEATLPDNLRATHVSLFDGSLQGIHRTDKPAFSFQGHPEASPGPHDAAPLFDHFIELIKQHSA</sequence>
<gene>
    <name evidence="1" type="primary">carA</name>
    <name type="ordered locus">VV0624</name>
</gene>
<dbReference type="EC" id="6.3.5.5" evidence="1"/>
<dbReference type="EMBL" id="BA000037">
    <property type="protein sequence ID" value="BAC93388.1"/>
    <property type="molecule type" value="Genomic_DNA"/>
</dbReference>
<dbReference type="RefSeq" id="WP_011149509.1">
    <property type="nucleotide sequence ID" value="NC_005139.1"/>
</dbReference>
<dbReference type="SMR" id="Q7MNU1"/>
<dbReference type="STRING" id="672.VV93_v1c05670"/>
<dbReference type="KEGG" id="vvy:VV0624"/>
<dbReference type="PATRIC" id="fig|196600.6.peg.644"/>
<dbReference type="eggNOG" id="COG0505">
    <property type="taxonomic scope" value="Bacteria"/>
</dbReference>
<dbReference type="HOGENOM" id="CLU_035901_1_1_6"/>
<dbReference type="UniPathway" id="UPA00068">
    <property type="reaction ID" value="UER00171"/>
</dbReference>
<dbReference type="UniPathway" id="UPA00070">
    <property type="reaction ID" value="UER00115"/>
</dbReference>
<dbReference type="Proteomes" id="UP000002675">
    <property type="component" value="Chromosome I"/>
</dbReference>
<dbReference type="GO" id="GO:0005524">
    <property type="term" value="F:ATP binding"/>
    <property type="evidence" value="ECO:0007669"/>
    <property type="project" value="UniProtKB-UniRule"/>
</dbReference>
<dbReference type="GO" id="GO:0004088">
    <property type="term" value="F:carbamoyl-phosphate synthase (glutamine-hydrolyzing) activity"/>
    <property type="evidence" value="ECO:0007669"/>
    <property type="project" value="UniProtKB-UniRule"/>
</dbReference>
<dbReference type="GO" id="GO:0004359">
    <property type="term" value="F:glutaminase activity"/>
    <property type="evidence" value="ECO:0007669"/>
    <property type="project" value="RHEA"/>
</dbReference>
<dbReference type="GO" id="GO:0006207">
    <property type="term" value="P:'de novo' pyrimidine nucleobase biosynthetic process"/>
    <property type="evidence" value="ECO:0007669"/>
    <property type="project" value="InterPro"/>
</dbReference>
<dbReference type="GO" id="GO:0044205">
    <property type="term" value="P:'de novo' UMP biosynthetic process"/>
    <property type="evidence" value="ECO:0007669"/>
    <property type="project" value="UniProtKB-UniRule"/>
</dbReference>
<dbReference type="GO" id="GO:0006541">
    <property type="term" value="P:glutamine metabolic process"/>
    <property type="evidence" value="ECO:0007669"/>
    <property type="project" value="InterPro"/>
</dbReference>
<dbReference type="GO" id="GO:0006526">
    <property type="term" value="P:L-arginine biosynthetic process"/>
    <property type="evidence" value="ECO:0007669"/>
    <property type="project" value="UniProtKB-UniRule"/>
</dbReference>
<dbReference type="CDD" id="cd01744">
    <property type="entry name" value="GATase1_CPSase"/>
    <property type="match status" value="1"/>
</dbReference>
<dbReference type="FunFam" id="3.40.50.880:FF:000011">
    <property type="entry name" value="Carbamoyl-phosphate synthase small chain"/>
    <property type="match status" value="1"/>
</dbReference>
<dbReference type="FunFam" id="3.50.30.20:FF:000001">
    <property type="entry name" value="Carbamoyl-phosphate synthase small chain"/>
    <property type="match status" value="1"/>
</dbReference>
<dbReference type="Gene3D" id="3.40.50.880">
    <property type="match status" value="1"/>
</dbReference>
<dbReference type="Gene3D" id="3.50.30.20">
    <property type="entry name" value="Carbamoyl-phosphate synthase small subunit, N-terminal domain"/>
    <property type="match status" value="1"/>
</dbReference>
<dbReference type="HAMAP" id="MF_01209">
    <property type="entry name" value="CPSase_S_chain"/>
    <property type="match status" value="1"/>
</dbReference>
<dbReference type="InterPro" id="IPR050472">
    <property type="entry name" value="Anth_synth/Amidotransfase"/>
</dbReference>
<dbReference type="InterPro" id="IPR006274">
    <property type="entry name" value="CarbamoylP_synth_ssu"/>
</dbReference>
<dbReference type="InterPro" id="IPR002474">
    <property type="entry name" value="CarbamoylP_synth_ssu_N"/>
</dbReference>
<dbReference type="InterPro" id="IPR036480">
    <property type="entry name" value="CarbP_synth_ssu_N_sf"/>
</dbReference>
<dbReference type="InterPro" id="IPR029062">
    <property type="entry name" value="Class_I_gatase-like"/>
</dbReference>
<dbReference type="InterPro" id="IPR035686">
    <property type="entry name" value="CPSase_GATase1"/>
</dbReference>
<dbReference type="InterPro" id="IPR017926">
    <property type="entry name" value="GATASE"/>
</dbReference>
<dbReference type="NCBIfam" id="TIGR01368">
    <property type="entry name" value="CPSaseIIsmall"/>
    <property type="match status" value="1"/>
</dbReference>
<dbReference type="NCBIfam" id="NF009475">
    <property type="entry name" value="PRK12838.1"/>
    <property type="match status" value="1"/>
</dbReference>
<dbReference type="PANTHER" id="PTHR43418:SF7">
    <property type="entry name" value="CARBAMOYL-PHOSPHATE SYNTHASE SMALL CHAIN"/>
    <property type="match status" value="1"/>
</dbReference>
<dbReference type="PANTHER" id="PTHR43418">
    <property type="entry name" value="MULTIFUNCTIONAL TRYPTOPHAN BIOSYNTHESIS PROTEIN-RELATED"/>
    <property type="match status" value="1"/>
</dbReference>
<dbReference type="Pfam" id="PF00988">
    <property type="entry name" value="CPSase_sm_chain"/>
    <property type="match status" value="1"/>
</dbReference>
<dbReference type="Pfam" id="PF00117">
    <property type="entry name" value="GATase"/>
    <property type="match status" value="1"/>
</dbReference>
<dbReference type="PRINTS" id="PR00097">
    <property type="entry name" value="ANTSNTHASEII"/>
</dbReference>
<dbReference type="PRINTS" id="PR00099">
    <property type="entry name" value="CPSGATASE"/>
</dbReference>
<dbReference type="PRINTS" id="PR00096">
    <property type="entry name" value="GATASE"/>
</dbReference>
<dbReference type="SMART" id="SM01097">
    <property type="entry name" value="CPSase_sm_chain"/>
    <property type="match status" value="1"/>
</dbReference>
<dbReference type="SUPFAM" id="SSF52021">
    <property type="entry name" value="Carbamoyl phosphate synthetase, small subunit N-terminal domain"/>
    <property type="match status" value="1"/>
</dbReference>
<dbReference type="SUPFAM" id="SSF52317">
    <property type="entry name" value="Class I glutamine amidotransferase-like"/>
    <property type="match status" value="1"/>
</dbReference>
<dbReference type="PROSITE" id="PS51273">
    <property type="entry name" value="GATASE_TYPE_1"/>
    <property type="match status" value="1"/>
</dbReference>
<protein>
    <recommendedName>
        <fullName evidence="1">Carbamoyl phosphate synthase small chain</fullName>
        <ecNumber evidence="1">6.3.5.5</ecNumber>
    </recommendedName>
    <alternativeName>
        <fullName evidence="1">Carbamoyl phosphate synthetase glutamine chain</fullName>
    </alternativeName>
</protein>
<proteinExistence type="inferred from homology"/>
<evidence type="ECO:0000255" key="1">
    <source>
        <dbReference type="HAMAP-Rule" id="MF_01209"/>
    </source>
</evidence>
<accession>Q7MNU1</accession>
<organism>
    <name type="scientific">Vibrio vulnificus (strain YJ016)</name>
    <dbReference type="NCBI Taxonomy" id="196600"/>
    <lineage>
        <taxon>Bacteria</taxon>
        <taxon>Pseudomonadati</taxon>
        <taxon>Pseudomonadota</taxon>
        <taxon>Gammaproteobacteria</taxon>
        <taxon>Vibrionales</taxon>
        <taxon>Vibrionaceae</taxon>
        <taxon>Vibrio</taxon>
    </lineage>
</organism>
<comment type="function">
    <text evidence="1">Small subunit of the glutamine-dependent carbamoyl phosphate synthetase (CPSase). CPSase catalyzes the formation of carbamoyl phosphate from the ammonia moiety of glutamine, carbonate, and phosphate donated by ATP, constituting the first step of 2 biosynthetic pathways, one leading to arginine and/or urea and the other to pyrimidine nucleotides. The small subunit (glutamine amidotransferase) binds and cleaves glutamine to supply the large subunit with the substrate ammonia.</text>
</comment>
<comment type="catalytic activity">
    <reaction evidence="1">
        <text>hydrogencarbonate + L-glutamine + 2 ATP + H2O = carbamoyl phosphate + L-glutamate + 2 ADP + phosphate + 2 H(+)</text>
        <dbReference type="Rhea" id="RHEA:18633"/>
        <dbReference type="ChEBI" id="CHEBI:15377"/>
        <dbReference type="ChEBI" id="CHEBI:15378"/>
        <dbReference type="ChEBI" id="CHEBI:17544"/>
        <dbReference type="ChEBI" id="CHEBI:29985"/>
        <dbReference type="ChEBI" id="CHEBI:30616"/>
        <dbReference type="ChEBI" id="CHEBI:43474"/>
        <dbReference type="ChEBI" id="CHEBI:58228"/>
        <dbReference type="ChEBI" id="CHEBI:58359"/>
        <dbReference type="ChEBI" id="CHEBI:456216"/>
        <dbReference type="EC" id="6.3.5.5"/>
    </reaction>
</comment>
<comment type="catalytic activity">
    <molecule>Carbamoyl phosphate synthase small chain</molecule>
    <reaction evidence="1">
        <text>L-glutamine + H2O = L-glutamate + NH4(+)</text>
        <dbReference type="Rhea" id="RHEA:15889"/>
        <dbReference type="ChEBI" id="CHEBI:15377"/>
        <dbReference type="ChEBI" id="CHEBI:28938"/>
        <dbReference type="ChEBI" id="CHEBI:29985"/>
        <dbReference type="ChEBI" id="CHEBI:58359"/>
    </reaction>
</comment>
<comment type="pathway">
    <text evidence="1">Amino-acid biosynthesis; L-arginine biosynthesis; carbamoyl phosphate from bicarbonate: step 1/1.</text>
</comment>
<comment type="pathway">
    <text evidence="1">Pyrimidine metabolism; UMP biosynthesis via de novo pathway; (S)-dihydroorotate from bicarbonate: step 1/3.</text>
</comment>
<comment type="subunit">
    <text evidence="1">Composed of two chains; the small (or glutamine) chain promotes the hydrolysis of glutamine to ammonia, which is used by the large (or ammonia) chain to synthesize carbamoyl phosphate. Tetramer of heterodimers (alpha,beta)4.</text>
</comment>
<comment type="similarity">
    <text evidence="1">Belongs to the CarA family.</text>
</comment>
<reference key="1">
    <citation type="journal article" date="2003" name="Genome Res.">
        <title>Comparative genome analysis of Vibrio vulnificus, a marine pathogen.</title>
        <authorList>
            <person name="Chen C.-Y."/>
            <person name="Wu K.-M."/>
            <person name="Chang Y.-C."/>
            <person name="Chang C.-H."/>
            <person name="Tsai H.-C."/>
            <person name="Liao T.-L."/>
            <person name="Liu Y.-M."/>
            <person name="Chen H.-J."/>
            <person name="Shen A.B.-T."/>
            <person name="Li J.-C."/>
            <person name="Su T.-L."/>
            <person name="Shao C.-P."/>
            <person name="Lee C.-T."/>
            <person name="Hor L.-I."/>
            <person name="Tsai S.-F."/>
        </authorList>
    </citation>
    <scope>NUCLEOTIDE SEQUENCE [LARGE SCALE GENOMIC DNA]</scope>
    <source>
        <strain>YJ016</strain>
    </source>
</reference>